<comment type="function">
    <text evidence="1">Endonuclease that specifically degrades the RNA of RNA-DNA hybrids.</text>
</comment>
<comment type="catalytic activity">
    <reaction evidence="1">
        <text>Endonucleolytic cleavage to 5'-phosphomonoester.</text>
        <dbReference type="EC" id="3.1.26.4"/>
    </reaction>
</comment>
<comment type="cofactor">
    <cofactor evidence="1">
        <name>Mg(2+)</name>
        <dbReference type="ChEBI" id="CHEBI:18420"/>
    </cofactor>
    <text evidence="1">Binds 1 Mg(2+) ion per subunit. May bind a second metal ion at a regulatory site, or after substrate binding.</text>
</comment>
<comment type="subunit">
    <text evidence="1">Monomer.</text>
</comment>
<comment type="subcellular location">
    <subcellularLocation>
        <location evidence="1">Cytoplasm</location>
    </subcellularLocation>
</comment>
<comment type="similarity">
    <text evidence="1">Belongs to the RNase H family.</text>
</comment>
<protein>
    <recommendedName>
        <fullName evidence="1">Ribonuclease H</fullName>
        <shortName evidence="1">RNase H</shortName>
        <ecNumber evidence="1">3.1.26.4</ecNumber>
    </recommendedName>
</protein>
<sequence>MTNYACSITNNIPVKIYTDGACSHNPGPGGWGVYLSYKNHEKKVYGSNINTTNNRMELTATIEALRLLKHSYKVELYTDSQYVQMGITKWIKKWIKNNWETSNKQLVCNVDLWQLLYTLIQKHQVSWHWVRGHSGNIGNEIADKLATNGKIEAMKIAKNNENTKKFLD</sequence>
<feature type="chain" id="PRO_0000332640" description="Ribonuclease H">
    <location>
        <begin position="1"/>
        <end position="168"/>
    </location>
</feature>
<feature type="domain" description="RNase H type-1" evidence="2">
    <location>
        <begin position="10"/>
        <end position="151"/>
    </location>
</feature>
<feature type="binding site" evidence="1">
    <location>
        <position position="19"/>
    </location>
    <ligand>
        <name>Mg(2+)</name>
        <dbReference type="ChEBI" id="CHEBI:18420"/>
        <label>1</label>
    </ligand>
</feature>
<feature type="binding site" evidence="1">
    <location>
        <position position="19"/>
    </location>
    <ligand>
        <name>Mg(2+)</name>
        <dbReference type="ChEBI" id="CHEBI:18420"/>
        <label>2</label>
    </ligand>
</feature>
<feature type="binding site" evidence="1">
    <location>
        <position position="57"/>
    </location>
    <ligand>
        <name>Mg(2+)</name>
        <dbReference type="ChEBI" id="CHEBI:18420"/>
        <label>1</label>
    </ligand>
</feature>
<feature type="binding site" evidence="1">
    <location>
        <position position="79"/>
    </location>
    <ligand>
        <name>Mg(2+)</name>
        <dbReference type="ChEBI" id="CHEBI:18420"/>
        <label>1</label>
    </ligand>
</feature>
<feature type="binding site" evidence="1">
    <location>
        <position position="143"/>
    </location>
    <ligand>
        <name>Mg(2+)</name>
        <dbReference type="ChEBI" id="CHEBI:18420"/>
        <label>2</label>
    </ligand>
</feature>
<name>RNH_ORITB</name>
<keyword id="KW-0963">Cytoplasm</keyword>
<keyword id="KW-0255">Endonuclease</keyword>
<keyword id="KW-0378">Hydrolase</keyword>
<keyword id="KW-0460">Magnesium</keyword>
<keyword id="KW-0479">Metal-binding</keyword>
<keyword id="KW-0540">Nuclease</keyword>
<keyword id="KW-1185">Reference proteome</keyword>
<evidence type="ECO:0000255" key="1">
    <source>
        <dbReference type="HAMAP-Rule" id="MF_00042"/>
    </source>
</evidence>
<evidence type="ECO:0000255" key="2">
    <source>
        <dbReference type="PROSITE-ProRule" id="PRU00408"/>
    </source>
</evidence>
<reference key="1">
    <citation type="journal article" date="2007" name="Proc. Natl. Acad. Sci. U.S.A.">
        <title>The Orientia tsutsugamushi genome reveals massive proliferation of conjugative type IV secretion system and host-cell interaction genes.</title>
        <authorList>
            <person name="Cho N.-H."/>
            <person name="Kim H.-R."/>
            <person name="Lee J.-H."/>
            <person name="Kim S.-Y."/>
            <person name="Kim J."/>
            <person name="Cha S."/>
            <person name="Kim S.-Y."/>
            <person name="Darby A.C."/>
            <person name="Fuxelius H.-H."/>
            <person name="Yin J."/>
            <person name="Kim J.H."/>
            <person name="Kim J."/>
            <person name="Lee S.J."/>
            <person name="Koh Y.-S."/>
            <person name="Jang W.-J."/>
            <person name="Park K.-H."/>
            <person name="Andersson S.G.E."/>
            <person name="Choi M.-S."/>
            <person name="Kim I.-S."/>
        </authorList>
    </citation>
    <scope>NUCLEOTIDE SEQUENCE [LARGE SCALE GENOMIC DNA]</scope>
    <source>
        <strain>Boryong</strain>
    </source>
</reference>
<accession>A5CEP5</accession>
<proteinExistence type="inferred from homology"/>
<gene>
    <name evidence="1" type="primary">rnhA</name>
    <name type="ordered locus">OTBS_1582</name>
</gene>
<dbReference type="EC" id="3.1.26.4" evidence="1"/>
<dbReference type="EMBL" id="AM494475">
    <property type="protein sequence ID" value="CAM80675.1"/>
    <property type="molecule type" value="Genomic_DNA"/>
</dbReference>
<dbReference type="RefSeq" id="WP_011944954.1">
    <property type="nucleotide sequence ID" value="NC_009488.1"/>
</dbReference>
<dbReference type="SMR" id="A5CEP5"/>
<dbReference type="KEGG" id="ots:OTBS_1582"/>
<dbReference type="eggNOG" id="COG0328">
    <property type="taxonomic scope" value="Bacteria"/>
</dbReference>
<dbReference type="HOGENOM" id="CLU_030894_6_0_5"/>
<dbReference type="Proteomes" id="UP000001565">
    <property type="component" value="Chromosome"/>
</dbReference>
<dbReference type="GO" id="GO:0005737">
    <property type="term" value="C:cytoplasm"/>
    <property type="evidence" value="ECO:0007669"/>
    <property type="project" value="UniProtKB-SubCell"/>
</dbReference>
<dbReference type="GO" id="GO:0000287">
    <property type="term" value="F:magnesium ion binding"/>
    <property type="evidence" value="ECO:0007669"/>
    <property type="project" value="UniProtKB-UniRule"/>
</dbReference>
<dbReference type="GO" id="GO:0003676">
    <property type="term" value="F:nucleic acid binding"/>
    <property type="evidence" value="ECO:0007669"/>
    <property type="project" value="InterPro"/>
</dbReference>
<dbReference type="GO" id="GO:0004523">
    <property type="term" value="F:RNA-DNA hybrid ribonuclease activity"/>
    <property type="evidence" value="ECO:0007669"/>
    <property type="project" value="UniProtKB-UniRule"/>
</dbReference>
<dbReference type="GO" id="GO:0043137">
    <property type="term" value="P:DNA replication, removal of RNA primer"/>
    <property type="evidence" value="ECO:0007669"/>
    <property type="project" value="TreeGrafter"/>
</dbReference>
<dbReference type="CDD" id="cd09278">
    <property type="entry name" value="RNase_HI_prokaryote_like"/>
    <property type="match status" value="1"/>
</dbReference>
<dbReference type="FunFam" id="3.30.420.10:FF:000089">
    <property type="entry name" value="Ribonuclease H"/>
    <property type="match status" value="1"/>
</dbReference>
<dbReference type="Gene3D" id="3.30.420.10">
    <property type="entry name" value="Ribonuclease H-like superfamily/Ribonuclease H"/>
    <property type="match status" value="1"/>
</dbReference>
<dbReference type="HAMAP" id="MF_00042">
    <property type="entry name" value="RNase_H"/>
    <property type="match status" value="1"/>
</dbReference>
<dbReference type="InterPro" id="IPR050092">
    <property type="entry name" value="RNase_H"/>
</dbReference>
<dbReference type="InterPro" id="IPR012337">
    <property type="entry name" value="RNaseH-like_sf"/>
</dbReference>
<dbReference type="InterPro" id="IPR002156">
    <property type="entry name" value="RNaseH_domain"/>
</dbReference>
<dbReference type="InterPro" id="IPR036397">
    <property type="entry name" value="RNaseH_sf"/>
</dbReference>
<dbReference type="InterPro" id="IPR022892">
    <property type="entry name" value="RNaseHI"/>
</dbReference>
<dbReference type="NCBIfam" id="NF001236">
    <property type="entry name" value="PRK00203.1"/>
    <property type="match status" value="1"/>
</dbReference>
<dbReference type="PANTHER" id="PTHR10642">
    <property type="entry name" value="RIBONUCLEASE H1"/>
    <property type="match status" value="1"/>
</dbReference>
<dbReference type="PANTHER" id="PTHR10642:SF26">
    <property type="entry name" value="RIBONUCLEASE H1"/>
    <property type="match status" value="1"/>
</dbReference>
<dbReference type="Pfam" id="PF00075">
    <property type="entry name" value="RNase_H"/>
    <property type="match status" value="1"/>
</dbReference>
<dbReference type="SUPFAM" id="SSF53098">
    <property type="entry name" value="Ribonuclease H-like"/>
    <property type="match status" value="1"/>
</dbReference>
<dbReference type="PROSITE" id="PS50879">
    <property type="entry name" value="RNASE_H_1"/>
    <property type="match status" value="1"/>
</dbReference>
<organism>
    <name type="scientific">Orientia tsutsugamushi (strain Boryong)</name>
    <name type="common">Rickettsia tsutsugamushi</name>
    <dbReference type="NCBI Taxonomy" id="357244"/>
    <lineage>
        <taxon>Bacteria</taxon>
        <taxon>Pseudomonadati</taxon>
        <taxon>Pseudomonadota</taxon>
        <taxon>Alphaproteobacteria</taxon>
        <taxon>Rickettsiales</taxon>
        <taxon>Rickettsiaceae</taxon>
        <taxon>Rickettsieae</taxon>
        <taxon>Orientia</taxon>
    </lineage>
</organism>